<accession>Q9PEJ1</accession>
<name>SAHH_XYLFA</name>
<dbReference type="EC" id="3.13.2.1" evidence="1"/>
<dbReference type="EMBL" id="AE003849">
    <property type="protein sequence ID" value="AAF83847.1"/>
    <property type="status" value="ALT_INIT"/>
    <property type="molecule type" value="Genomic_DNA"/>
</dbReference>
<dbReference type="PIR" id="D82730">
    <property type="entry name" value="D82730"/>
</dbReference>
<dbReference type="RefSeq" id="WP_010893556.1">
    <property type="nucleotide sequence ID" value="NC_002488.3"/>
</dbReference>
<dbReference type="SMR" id="Q9PEJ1"/>
<dbReference type="STRING" id="160492.XF_1037"/>
<dbReference type="KEGG" id="xfa:XF_1037"/>
<dbReference type="eggNOG" id="COG0499">
    <property type="taxonomic scope" value="Bacteria"/>
</dbReference>
<dbReference type="HOGENOM" id="CLU_025194_2_1_6"/>
<dbReference type="UniPathway" id="UPA00314">
    <property type="reaction ID" value="UER00076"/>
</dbReference>
<dbReference type="Proteomes" id="UP000000812">
    <property type="component" value="Chromosome"/>
</dbReference>
<dbReference type="GO" id="GO:0005829">
    <property type="term" value="C:cytosol"/>
    <property type="evidence" value="ECO:0007669"/>
    <property type="project" value="TreeGrafter"/>
</dbReference>
<dbReference type="GO" id="GO:0004013">
    <property type="term" value="F:adenosylhomocysteinase activity"/>
    <property type="evidence" value="ECO:0007669"/>
    <property type="project" value="UniProtKB-UniRule"/>
</dbReference>
<dbReference type="GO" id="GO:0071269">
    <property type="term" value="P:L-homocysteine biosynthetic process"/>
    <property type="evidence" value="ECO:0007669"/>
    <property type="project" value="UniProtKB-UniRule"/>
</dbReference>
<dbReference type="GO" id="GO:0006730">
    <property type="term" value="P:one-carbon metabolic process"/>
    <property type="evidence" value="ECO:0007669"/>
    <property type="project" value="UniProtKB-KW"/>
</dbReference>
<dbReference type="GO" id="GO:0033353">
    <property type="term" value="P:S-adenosylmethionine cycle"/>
    <property type="evidence" value="ECO:0007669"/>
    <property type="project" value="TreeGrafter"/>
</dbReference>
<dbReference type="CDD" id="cd00401">
    <property type="entry name" value="SAHH"/>
    <property type="match status" value="1"/>
</dbReference>
<dbReference type="FunFam" id="3.40.50.720:FF:000004">
    <property type="entry name" value="Adenosylhomocysteinase"/>
    <property type="match status" value="1"/>
</dbReference>
<dbReference type="Gene3D" id="3.40.50.1480">
    <property type="entry name" value="Adenosylhomocysteinase-like"/>
    <property type="match status" value="1"/>
</dbReference>
<dbReference type="Gene3D" id="3.40.50.720">
    <property type="entry name" value="NAD(P)-binding Rossmann-like Domain"/>
    <property type="match status" value="1"/>
</dbReference>
<dbReference type="HAMAP" id="MF_00563">
    <property type="entry name" value="AdoHcyase"/>
    <property type="match status" value="1"/>
</dbReference>
<dbReference type="InterPro" id="IPR042172">
    <property type="entry name" value="Adenosylhomocyst_ase-like_sf"/>
</dbReference>
<dbReference type="InterPro" id="IPR000043">
    <property type="entry name" value="Adenosylhomocysteinase-like"/>
</dbReference>
<dbReference type="InterPro" id="IPR015878">
    <property type="entry name" value="Ado_hCys_hydrolase_NAD-bd"/>
</dbReference>
<dbReference type="InterPro" id="IPR036291">
    <property type="entry name" value="NAD(P)-bd_dom_sf"/>
</dbReference>
<dbReference type="InterPro" id="IPR020082">
    <property type="entry name" value="S-Ado-L-homoCys_hydrolase_CS"/>
</dbReference>
<dbReference type="NCBIfam" id="TIGR00936">
    <property type="entry name" value="ahcY"/>
    <property type="match status" value="1"/>
</dbReference>
<dbReference type="NCBIfam" id="NF004005">
    <property type="entry name" value="PRK05476.2-3"/>
    <property type="match status" value="1"/>
</dbReference>
<dbReference type="PANTHER" id="PTHR23420">
    <property type="entry name" value="ADENOSYLHOMOCYSTEINASE"/>
    <property type="match status" value="1"/>
</dbReference>
<dbReference type="PANTHER" id="PTHR23420:SF0">
    <property type="entry name" value="ADENOSYLHOMOCYSTEINASE"/>
    <property type="match status" value="1"/>
</dbReference>
<dbReference type="Pfam" id="PF05221">
    <property type="entry name" value="AdoHcyase"/>
    <property type="match status" value="1"/>
</dbReference>
<dbReference type="Pfam" id="PF00670">
    <property type="entry name" value="AdoHcyase_NAD"/>
    <property type="match status" value="1"/>
</dbReference>
<dbReference type="PIRSF" id="PIRSF001109">
    <property type="entry name" value="Ad_hcy_hydrolase"/>
    <property type="match status" value="1"/>
</dbReference>
<dbReference type="SMART" id="SM00996">
    <property type="entry name" value="AdoHcyase"/>
    <property type="match status" value="1"/>
</dbReference>
<dbReference type="SMART" id="SM00997">
    <property type="entry name" value="AdoHcyase_NAD"/>
    <property type="match status" value="1"/>
</dbReference>
<dbReference type="SUPFAM" id="SSF52283">
    <property type="entry name" value="Formate/glycerate dehydrogenase catalytic domain-like"/>
    <property type="match status" value="1"/>
</dbReference>
<dbReference type="SUPFAM" id="SSF51735">
    <property type="entry name" value="NAD(P)-binding Rossmann-fold domains"/>
    <property type="match status" value="1"/>
</dbReference>
<dbReference type="PROSITE" id="PS00738">
    <property type="entry name" value="ADOHCYASE_1"/>
    <property type="match status" value="1"/>
</dbReference>
<dbReference type="PROSITE" id="PS00739">
    <property type="entry name" value="ADOHCYASE_2"/>
    <property type="match status" value="1"/>
</dbReference>
<sequence>MNTHPQTSPNTHYKIADISLTDWGRKEIDIAEHEMPGLMSIRRKYASKQPLKGVRVTGSLHMTIQTAVLIETLKDIGADVRWASCNIFSTQDHAAAAIATSGTPVFAWKGETLEEYWDCTLQALTFTLSDGTLTGPELIVDDGGDATLLIHKGYELENGSTWVDEPSDSLEEQVIKRLLKRIAIERPGYWTRVVNDWKGVSEETTTGVHRLYQIAATGRLLVPAINVNDSVTKSKFDNLYGCRESLADGLKRAMDVMLAGKLAVVCGYGDVGKGSAHSLRAYGARVIVTEIDPICALQAAMEGFEVTTVEDTLGQADIYVTTTGNKDVIRIEHMTAMKDQVIVCNIGHFDNEIQVDALNALAGVQKINIKPQVDKFILPNGNTLFLLAEGRLVNLGCATGHPSFVMSNSFANQTLAQIDLWQNKDVYEKNVYRLPKKLDEEVARLHLEKIGVKLTTLTANQAAYLGISVEGPFKPEHYRY</sequence>
<evidence type="ECO:0000255" key="1">
    <source>
        <dbReference type="HAMAP-Rule" id="MF_00563"/>
    </source>
</evidence>
<evidence type="ECO:0000305" key="2"/>
<proteinExistence type="inferred from homology"/>
<gene>
    <name evidence="1" type="primary">ahcY</name>
    <name type="ordered locus">XF_1037</name>
</gene>
<feature type="chain" id="PRO_0000116998" description="Adenosylhomocysteinase">
    <location>
        <begin position="1"/>
        <end position="480"/>
    </location>
</feature>
<feature type="binding site" evidence="1">
    <location>
        <position position="63"/>
    </location>
    <ligand>
        <name>substrate</name>
    </ligand>
</feature>
<feature type="binding site" evidence="1">
    <location>
        <position position="142"/>
    </location>
    <ligand>
        <name>substrate</name>
    </ligand>
</feature>
<feature type="binding site" evidence="1">
    <location>
        <position position="203"/>
    </location>
    <ligand>
        <name>substrate</name>
    </ligand>
</feature>
<feature type="binding site" evidence="1">
    <location>
        <begin position="204"/>
        <end position="206"/>
    </location>
    <ligand>
        <name>NAD(+)</name>
        <dbReference type="ChEBI" id="CHEBI:57540"/>
    </ligand>
</feature>
<feature type="binding site" evidence="1">
    <location>
        <position position="233"/>
    </location>
    <ligand>
        <name>substrate</name>
    </ligand>
</feature>
<feature type="binding site" evidence="1">
    <location>
        <position position="237"/>
    </location>
    <ligand>
        <name>substrate</name>
    </ligand>
</feature>
<feature type="binding site" evidence="1">
    <location>
        <position position="238"/>
    </location>
    <ligand>
        <name>NAD(+)</name>
        <dbReference type="ChEBI" id="CHEBI:57540"/>
    </ligand>
</feature>
<feature type="binding site" evidence="1">
    <location>
        <begin position="267"/>
        <end position="272"/>
    </location>
    <ligand>
        <name>NAD(+)</name>
        <dbReference type="ChEBI" id="CHEBI:57540"/>
    </ligand>
</feature>
<feature type="binding site" evidence="1">
    <location>
        <position position="290"/>
    </location>
    <ligand>
        <name>NAD(+)</name>
        <dbReference type="ChEBI" id="CHEBI:57540"/>
    </ligand>
</feature>
<feature type="binding site" evidence="1">
    <location>
        <position position="325"/>
    </location>
    <ligand>
        <name>NAD(+)</name>
        <dbReference type="ChEBI" id="CHEBI:57540"/>
    </ligand>
</feature>
<feature type="binding site" evidence="1">
    <location>
        <begin position="346"/>
        <end position="348"/>
    </location>
    <ligand>
        <name>NAD(+)</name>
        <dbReference type="ChEBI" id="CHEBI:57540"/>
    </ligand>
</feature>
<feature type="binding site" evidence="1">
    <location>
        <position position="394"/>
    </location>
    <ligand>
        <name>NAD(+)</name>
        <dbReference type="ChEBI" id="CHEBI:57540"/>
    </ligand>
</feature>
<keyword id="KW-0963">Cytoplasm</keyword>
<keyword id="KW-0378">Hydrolase</keyword>
<keyword id="KW-0520">NAD</keyword>
<keyword id="KW-0554">One-carbon metabolism</keyword>
<comment type="function">
    <text evidence="1">May play a key role in the regulation of the intracellular concentration of adenosylhomocysteine.</text>
</comment>
<comment type="catalytic activity">
    <reaction evidence="1">
        <text>S-adenosyl-L-homocysteine + H2O = L-homocysteine + adenosine</text>
        <dbReference type="Rhea" id="RHEA:21708"/>
        <dbReference type="ChEBI" id="CHEBI:15377"/>
        <dbReference type="ChEBI" id="CHEBI:16335"/>
        <dbReference type="ChEBI" id="CHEBI:57856"/>
        <dbReference type="ChEBI" id="CHEBI:58199"/>
        <dbReference type="EC" id="3.13.2.1"/>
    </reaction>
</comment>
<comment type="cofactor">
    <cofactor evidence="1">
        <name>NAD(+)</name>
        <dbReference type="ChEBI" id="CHEBI:57540"/>
    </cofactor>
    <text evidence="1">Binds 1 NAD(+) per subunit.</text>
</comment>
<comment type="pathway">
    <text evidence="1">Amino-acid biosynthesis; L-homocysteine biosynthesis; L-homocysteine from S-adenosyl-L-homocysteine: step 1/1.</text>
</comment>
<comment type="subcellular location">
    <subcellularLocation>
        <location evidence="1">Cytoplasm</location>
    </subcellularLocation>
</comment>
<comment type="similarity">
    <text evidence="1">Belongs to the adenosylhomocysteinase family.</text>
</comment>
<comment type="sequence caution" evidence="2">
    <conflict type="erroneous initiation">
        <sequence resource="EMBL-CDS" id="AAF83847"/>
    </conflict>
</comment>
<protein>
    <recommendedName>
        <fullName evidence="1">Adenosylhomocysteinase</fullName>
        <ecNumber evidence="1">3.13.2.1</ecNumber>
    </recommendedName>
    <alternativeName>
        <fullName evidence="1">S-adenosyl-L-homocysteine hydrolase</fullName>
        <shortName evidence="1">AdoHcyase</shortName>
    </alternativeName>
</protein>
<organism>
    <name type="scientific">Xylella fastidiosa (strain 9a5c)</name>
    <dbReference type="NCBI Taxonomy" id="160492"/>
    <lineage>
        <taxon>Bacteria</taxon>
        <taxon>Pseudomonadati</taxon>
        <taxon>Pseudomonadota</taxon>
        <taxon>Gammaproteobacteria</taxon>
        <taxon>Lysobacterales</taxon>
        <taxon>Lysobacteraceae</taxon>
        <taxon>Xylella</taxon>
    </lineage>
</organism>
<reference key="1">
    <citation type="journal article" date="2000" name="Nature">
        <title>The genome sequence of the plant pathogen Xylella fastidiosa.</title>
        <authorList>
            <person name="Simpson A.J.G."/>
            <person name="Reinach F.C."/>
            <person name="Arruda P."/>
            <person name="Abreu F.A."/>
            <person name="Acencio M."/>
            <person name="Alvarenga R."/>
            <person name="Alves L.M.C."/>
            <person name="Araya J.E."/>
            <person name="Baia G.S."/>
            <person name="Baptista C.S."/>
            <person name="Barros M.H."/>
            <person name="Bonaccorsi E.D."/>
            <person name="Bordin S."/>
            <person name="Bove J.M."/>
            <person name="Briones M.R.S."/>
            <person name="Bueno M.R.P."/>
            <person name="Camargo A.A."/>
            <person name="Camargo L.E.A."/>
            <person name="Carraro D.M."/>
            <person name="Carrer H."/>
            <person name="Colauto N.B."/>
            <person name="Colombo C."/>
            <person name="Costa F.F."/>
            <person name="Costa M.C.R."/>
            <person name="Costa-Neto C.M."/>
            <person name="Coutinho L.L."/>
            <person name="Cristofani M."/>
            <person name="Dias-Neto E."/>
            <person name="Docena C."/>
            <person name="El-Dorry H."/>
            <person name="Facincani A.P."/>
            <person name="Ferreira A.J.S."/>
            <person name="Ferreira V.C.A."/>
            <person name="Ferro J.A."/>
            <person name="Fraga J.S."/>
            <person name="Franca S.C."/>
            <person name="Franco M.C."/>
            <person name="Frohme M."/>
            <person name="Furlan L.R."/>
            <person name="Garnier M."/>
            <person name="Goldman G.H."/>
            <person name="Goldman M.H.S."/>
            <person name="Gomes S.L."/>
            <person name="Gruber A."/>
            <person name="Ho P.L."/>
            <person name="Hoheisel J.D."/>
            <person name="Junqueira M.L."/>
            <person name="Kemper E.L."/>
            <person name="Kitajima J.P."/>
            <person name="Krieger J.E."/>
            <person name="Kuramae E.E."/>
            <person name="Laigret F."/>
            <person name="Lambais M.R."/>
            <person name="Leite L.C.C."/>
            <person name="Lemos E.G.M."/>
            <person name="Lemos M.V.F."/>
            <person name="Lopes S.A."/>
            <person name="Lopes C.R."/>
            <person name="Machado J.A."/>
            <person name="Machado M.A."/>
            <person name="Madeira A.M.B.N."/>
            <person name="Madeira H.M.F."/>
            <person name="Marino C.L."/>
            <person name="Marques M.V."/>
            <person name="Martins E.A.L."/>
            <person name="Martins E.M.F."/>
            <person name="Matsukuma A.Y."/>
            <person name="Menck C.F.M."/>
            <person name="Miracca E.C."/>
            <person name="Miyaki C.Y."/>
            <person name="Monteiro-Vitorello C.B."/>
            <person name="Moon D.H."/>
            <person name="Nagai M.A."/>
            <person name="Nascimento A.L.T.O."/>
            <person name="Netto L.E.S."/>
            <person name="Nhani A. Jr."/>
            <person name="Nobrega F.G."/>
            <person name="Nunes L.R."/>
            <person name="Oliveira M.A."/>
            <person name="de Oliveira M.C."/>
            <person name="de Oliveira R.C."/>
            <person name="Palmieri D.A."/>
            <person name="Paris A."/>
            <person name="Peixoto B.R."/>
            <person name="Pereira G.A.G."/>
            <person name="Pereira H.A. Jr."/>
            <person name="Pesquero J.B."/>
            <person name="Quaggio R.B."/>
            <person name="Roberto P.G."/>
            <person name="Rodrigues V."/>
            <person name="de Rosa A.J.M."/>
            <person name="de Rosa V.E. Jr."/>
            <person name="de Sa R.G."/>
            <person name="Santelli R.V."/>
            <person name="Sawasaki H.E."/>
            <person name="da Silva A.C.R."/>
            <person name="da Silva A.M."/>
            <person name="da Silva F.R."/>
            <person name="Silva W.A. Jr."/>
            <person name="da Silveira J.F."/>
            <person name="Silvestri M.L.Z."/>
            <person name="Siqueira W.J."/>
            <person name="de Souza A.A."/>
            <person name="de Souza A.P."/>
            <person name="Terenzi M.F."/>
            <person name="Truffi D."/>
            <person name="Tsai S.M."/>
            <person name="Tsuhako M.H."/>
            <person name="Vallada H."/>
            <person name="Van Sluys M.A."/>
            <person name="Verjovski-Almeida S."/>
            <person name="Vettore A.L."/>
            <person name="Zago M.A."/>
            <person name="Zatz M."/>
            <person name="Meidanis J."/>
            <person name="Setubal J.C."/>
        </authorList>
    </citation>
    <scope>NUCLEOTIDE SEQUENCE [LARGE SCALE GENOMIC DNA]</scope>
    <source>
        <strain>9a5c</strain>
    </source>
</reference>